<evidence type="ECO:0000255" key="1">
    <source>
        <dbReference type="HAMAP-Rule" id="MF_00433"/>
    </source>
</evidence>
<gene>
    <name evidence="1" type="primary">petL</name>
</gene>
<organism>
    <name type="scientific">Pelargonium hortorum</name>
    <name type="common">Common geranium</name>
    <name type="synonym">Pelargonium inquinans x Pelargonium zonale</name>
    <dbReference type="NCBI Taxonomy" id="4031"/>
    <lineage>
        <taxon>Eukaryota</taxon>
        <taxon>Viridiplantae</taxon>
        <taxon>Streptophyta</taxon>
        <taxon>Embryophyta</taxon>
        <taxon>Tracheophyta</taxon>
        <taxon>Spermatophyta</taxon>
        <taxon>Magnoliopsida</taxon>
        <taxon>eudicotyledons</taxon>
        <taxon>Gunneridae</taxon>
        <taxon>Pentapetalae</taxon>
        <taxon>rosids</taxon>
        <taxon>malvids</taxon>
        <taxon>Geraniales</taxon>
        <taxon>Geraniaceae</taxon>
        <taxon>Pelargonium</taxon>
    </lineage>
</organism>
<geneLocation type="chloroplast"/>
<accession>Q06FK8</accession>
<keyword id="KW-0150">Chloroplast</keyword>
<keyword id="KW-0249">Electron transport</keyword>
<keyword id="KW-0472">Membrane</keyword>
<keyword id="KW-0602">Photosynthesis</keyword>
<keyword id="KW-0934">Plastid</keyword>
<keyword id="KW-0793">Thylakoid</keyword>
<keyword id="KW-0812">Transmembrane</keyword>
<keyword id="KW-1133">Transmembrane helix</keyword>
<keyword id="KW-0813">Transport</keyword>
<proteinExistence type="inferred from homology"/>
<feature type="chain" id="PRO_0000275531" description="Cytochrome b6-f complex subunit 6">
    <location>
        <begin position="1"/>
        <end position="31"/>
    </location>
</feature>
<feature type="transmembrane region" description="Helical" evidence="1">
    <location>
        <begin position="4"/>
        <end position="24"/>
    </location>
</feature>
<dbReference type="EMBL" id="DQ897681">
    <property type="protein sequence ID" value="ABI17364.1"/>
    <property type="molecule type" value="Genomic_DNA"/>
</dbReference>
<dbReference type="EMBL" id="DQ897681">
    <property type="protein sequence ID" value="ABI17274.1"/>
    <property type="molecule type" value="Genomic_DNA"/>
</dbReference>
<dbReference type="RefSeq" id="YP_784083.1">
    <property type="nucleotide sequence ID" value="NC_008454.1"/>
</dbReference>
<dbReference type="RefSeq" id="YP_784173.1">
    <property type="nucleotide sequence ID" value="NC_008454.1"/>
</dbReference>
<dbReference type="SMR" id="Q06FK8"/>
<dbReference type="GeneID" id="4362845"/>
<dbReference type="GeneID" id="4362920"/>
<dbReference type="GO" id="GO:0009535">
    <property type="term" value="C:chloroplast thylakoid membrane"/>
    <property type="evidence" value="ECO:0007669"/>
    <property type="project" value="UniProtKB-SubCell"/>
</dbReference>
<dbReference type="GO" id="GO:0009512">
    <property type="term" value="C:cytochrome b6f complex"/>
    <property type="evidence" value="ECO:0007669"/>
    <property type="project" value="InterPro"/>
</dbReference>
<dbReference type="GO" id="GO:0045158">
    <property type="term" value="F:electron transporter, transferring electrons within cytochrome b6/f complex of photosystem II activity"/>
    <property type="evidence" value="ECO:0007669"/>
    <property type="project" value="UniProtKB-UniRule"/>
</dbReference>
<dbReference type="GO" id="GO:0015979">
    <property type="term" value="P:photosynthesis"/>
    <property type="evidence" value="ECO:0007669"/>
    <property type="project" value="UniProtKB-KW"/>
</dbReference>
<dbReference type="HAMAP" id="MF_00433">
    <property type="entry name" value="Cytb6_f_PetL"/>
    <property type="match status" value="1"/>
</dbReference>
<dbReference type="InterPro" id="IPR007802">
    <property type="entry name" value="Cyt_b6/f_cplx_su6"/>
</dbReference>
<dbReference type="PANTHER" id="PTHR37266">
    <property type="entry name" value="CYTOCHROME B6-F COMPLEX SUBUNIT 6"/>
    <property type="match status" value="1"/>
</dbReference>
<dbReference type="PANTHER" id="PTHR37266:SF1">
    <property type="entry name" value="CYTOCHROME B6-F COMPLEX SUBUNIT 6"/>
    <property type="match status" value="1"/>
</dbReference>
<dbReference type="Pfam" id="PF05115">
    <property type="entry name" value="PetL"/>
    <property type="match status" value="1"/>
</dbReference>
<dbReference type="SUPFAM" id="SSF103436">
    <property type="entry name" value="PetL subunit of the cytochrome b6f complex"/>
    <property type="match status" value="1"/>
</dbReference>
<name>PETL_PELHO</name>
<sequence length="31" mass="3417">MLTITSYFGFLLVALTITSALFIGLSKIRLI</sequence>
<reference key="1">
    <citation type="journal article" date="2006" name="Mol. Biol. Evol.">
        <title>The complete chloroplast genome sequence of Pelargonium x hortorum: organization and evolution of the largest and most highly rearranged chloroplast genome of land plants.</title>
        <authorList>
            <person name="Chumley T.W."/>
            <person name="Palmer J.D."/>
            <person name="Mower J.P."/>
            <person name="Fourcade H.M."/>
            <person name="Calie P.J."/>
            <person name="Boore J.L."/>
            <person name="Jansen R.K."/>
        </authorList>
    </citation>
    <scope>NUCLEOTIDE SEQUENCE [LARGE SCALE GENOMIC DNA]</scope>
    <source>
        <strain>cv. Ringo White</strain>
    </source>
</reference>
<protein>
    <recommendedName>
        <fullName evidence="1">Cytochrome b6-f complex subunit 6</fullName>
    </recommendedName>
    <alternativeName>
        <fullName evidence="1">Cytochrome b6-f complex subunit PetL</fullName>
    </alternativeName>
    <alternativeName>
        <fullName evidence="1">Cytochrome b6-f complex subunit VI</fullName>
    </alternativeName>
</protein>
<comment type="function">
    <text evidence="1">Component of the cytochrome b6-f complex, which mediates electron transfer between photosystem II (PSII) and photosystem I (PSI), cyclic electron flow around PSI, and state transitions. PetL is important for photoautotrophic growth as well as for electron transfer efficiency and stability of the cytochrome b6-f complex.</text>
</comment>
<comment type="subunit">
    <text evidence="1">The 4 large subunits of the cytochrome b6-f complex are cytochrome b6, subunit IV (17 kDa polypeptide, PetD), cytochrome f and the Rieske protein, while the 4 small subunits are PetG, PetL, PetM and PetN. The complex functions as a dimer.</text>
</comment>
<comment type="subcellular location">
    <subcellularLocation>
        <location evidence="1">Plastid</location>
        <location evidence="1">Chloroplast thylakoid membrane</location>
        <topology evidence="1">Single-pass membrane protein</topology>
    </subcellularLocation>
</comment>
<comment type="similarity">
    <text evidence="1">Belongs to the PetL family.</text>
</comment>